<comment type="function">
    <text evidence="1">Part of the phosphoribosylformylglycinamidine synthase complex involved in the purines biosynthetic pathway. Catalyzes the ATP-dependent conversion of formylglycinamide ribonucleotide (FGAR) and glutamine to yield formylglycinamidine ribonucleotide (FGAM) and glutamate. The FGAM synthase complex is composed of three subunits. PurQ produces an ammonia molecule by converting glutamine to glutamate. PurL transfers the ammonia molecule to FGAR to form FGAM in an ATP-dependent manner. PurS interacts with PurQ and PurL and is thought to assist in the transfer of the ammonia molecule from PurQ to PurL.</text>
</comment>
<comment type="catalytic activity">
    <reaction evidence="1">
        <text>N(2)-formyl-N(1)-(5-phospho-beta-D-ribosyl)glycinamide + L-glutamine + ATP + H2O = 2-formamido-N(1)-(5-O-phospho-beta-D-ribosyl)acetamidine + L-glutamate + ADP + phosphate + H(+)</text>
        <dbReference type="Rhea" id="RHEA:17129"/>
        <dbReference type="ChEBI" id="CHEBI:15377"/>
        <dbReference type="ChEBI" id="CHEBI:15378"/>
        <dbReference type="ChEBI" id="CHEBI:29985"/>
        <dbReference type="ChEBI" id="CHEBI:30616"/>
        <dbReference type="ChEBI" id="CHEBI:43474"/>
        <dbReference type="ChEBI" id="CHEBI:58359"/>
        <dbReference type="ChEBI" id="CHEBI:147286"/>
        <dbReference type="ChEBI" id="CHEBI:147287"/>
        <dbReference type="ChEBI" id="CHEBI:456216"/>
        <dbReference type="EC" id="6.3.5.3"/>
    </reaction>
</comment>
<comment type="catalytic activity">
    <reaction evidence="1">
        <text>L-glutamine + H2O = L-glutamate + NH4(+)</text>
        <dbReference type="Rhea" id="RHEA:15889"/>
        <dbReference type="ChEBI" id="CHEBI:15377"/>
        <dbReference type="ChEBI" id="CHEBI:28938"/>
        <dbReference type="ChEBI" id="CHEBI:29985"/>
        <dbReference type="ChEBI" id="CHEBI:58359"/>
        <dbReference type="EC" id="3.5.1.2"/>
    </reaction>
</comment>
<comment type="pathway">
    <text evidence="1">Purine metabolism; IMP biosynthesis via de novo pathway; 5-amino-1-(5-phospho-D-ribosyl)imidazole from N(2)-formyl-N(1)-(5-phospho-D-ribosyl)glycinamide: step 1/2.</text>
</comment>
<comment type="subunit">
    <text evidence="1">Part of the FGAM synthase complex composed of 1 PurL, 1 PurQ and 2 PurS subunits.</text>
</comment>
<comment type="subcellular location">
    <subcellularLocation>
        <location evidence="1">Cytoplasm</location>
    </subcellularLocation>
</comment>
<gene>
    <name evidence="1" type="primary">purQ</name>
    <name type="ordered locus">RHE_CH02281</name>
</gene>
<accession>Q2K7X5</accession>
<evidence type="ECO:0000255" key="1">
    <source>
        <dbReference type="HAMAP-Rule" id="MF_00421"/>
    </source>
</evidence>
<feature type="chain" id="PRO_0000252720" description="Phosphoribosylformylglycinamidine synthase subunit PurQ">
    <location>
        <begin position="1"/>
        <end position="223"/>
    </location>
</feature>
<feature type="domain" description="Glutamine amidotransferase type-1" evidence="1">
    <location>
        <begin position="3"/>
        <end position="223"/>
    </location>
</feature>
<feature type="active site" description="Nucleophile" evidence="1">
    <location>
        <position position="86"/>
    </location>
</feature>
<feature type="active site" evidence="1">
    <location>
        <position position="196"/>
    </location>
</feature>
<feature type="active site" evidence="1">
    <location>
        <position position="198"/>
    </location>
</feature>
<protein>
    <recommendedName>
        <fullName evidence="1">Phosphoribosylformylglycinamidine synthase subunit PurQ</fullName>
        <shortName evidence="1">FGAM synthase</shortName>
        <ecNumber evidence="1">6.3.5.3</ecNumber>
    </recommendedName>
    <alternativeName>
        <fullName evidence="1">Formylglycinamide ribonucleotide amidotransferase subunit I</fullName>
        <shortName evidence="1">FGAR amidotransferase I</shortName>
        <shortName evidence="1">FGAR-AT I</shortName>
    </alternativeName>
    <alternativeName>
        <fullName evidence="1">Glutaminase PurQ</fullName>
        <ecNumber evidence="1">3.5.1.2</ecNumber>
    </alternativeName>
    <alternativeName>
        <fullName evidence="1">Phosphoribosylformylglycinamidine synthase subunit I</fullName>
    </alternativeName>
</protein>
<dbReference type="EC" id="6.3.5.3" evidence="1"/>
<dbReference type="EC" id="3.5.1.2" evidence="1"/>
<dbReference type="EMBL" id="CP000133">
    <property type="protein sequence ID" value="ABC91061.1"/>
    <property type="molecule type" value="Genomic_DNA"/>
</dbReference>
<dbReference type="RefSeq" id="WP_011425541.1">
    <property type="nucleotide sequence ID" value="NC_007761.1"/>
</dbReference>
<dbReference type="SMR" id="Q2K7X5"/>
<dbReference type="KEGG" id="ret:RHE_CH02281"/>
<dbReference type="eggNOG" id="COG0047">
    <property type="taxonomic scope" value="Bacteria"/>
</dbReference>
<dbReference type="HOGENOM" id="CLU_001031_3_1_5"/>
<dbReference type="OrthoDB" id="9804441at2"/>
<dbReference type="UniPathway" id="UPA00074">
    <property type="reaction ID" value="UER00128"/>
</dbReference>
<dbReference type="Proteomes" id="UP000001936">
    <property type="component" value="Chromosome"/>
</dbReference>
<dbReference type="GO" id="GO:0005737">
    <property type="term" value="C:cytoplasm"/>
    <property type="evidence" value="ECO:0007669"/>
    <property type="project" value="UniProtKB-SubCell"/>
</dbReference>
<dbReference type="GO" id="GO:0005524">
    <property type="term" value="F:ATP binding"/>
    <property type="evidence" value="ECO:0007669"/>
    <property type="project" value="UniProtKB-KW"/>
</dbReference>
<dbReference type="GO" id="GO:0004359">
    <property type="term" value="F:glutaminase activity"/>
    <property type="evidence" value="ECO:0007669"/>
    <property type="project" value="UniProtKB-EC"/>
</dbReference>
<dbReference type="GO" id="GO:0004642">
    <property type="term" value="F:phosphoribosylformylglycinamidine synthase activity"/>
    <property type="evidence" value="ECO:0007669"/>
    <property type="project" value="UniProtKB-UniRule"/>
</dbReference>
<dbReference type="GO" id="GO:0006189">
    <property type="term" value="P:'de novo' IMP biosynthetic process"/>
    <property type="evidence" value="ECO:0007669"/>
    <property type="project" value="UniProtKB-UniRule"/>
</dbReference>
<dbReference type="CDD" id="cd01740">
    <property type="entry name" value="GATase1_FGAR_AT"/>
    <property type="match status" value="1"/>
</dbReference>
<dbReference type="Gene3D" id="3.40.50.880">
    <property type="match status" value="1"/>
</dbReference>
<dbReference type="HAMAP" id="MF_00421">
    <property type="entry name" value="PurQ"/>
    <property type="match status" value="1"/>
</dbReference>
<dbReference type="InterPro" id="IPR029062">
    <property type="entry name" value="Class_I_gatase-like"/>
</dbReference>
<dbReference type="InterPro" id="IPR010075">
    <property type="entry name" value="PRibForGlyAmidine_synth_PurQ"/>
</dbReference>
<dbReference type="NCBIfam" id="TIGR01737">
    <property type="entry name" value="FGAM_synth_I"/>
    <property type="match status" value="1"/>
</dbReference>
<dbReference type="NCBIfam" id="NF002957">
    <property type="entry name" value="PRK03619.1"/>
    <property type="match status" value="1"/>
</dbReference>
<dbReference type="PANTHER" id="PTHR47552">
    <property type="entry name" value="PHOSPHORIBOSYLFORMYLGLYCINAMIDINE SYNTHASE SUBUNIT PURQ"/>
    <property type="match status" value="1"/>
</dbReference>
<dbReference type="PANTHER" id="PTHR47552:SF1">
    <property type="entry name" value="PHOSPHORIBOSYLFORMYLGLYCINAMIDINE SYNTHASE SUBUNIT PURQ"/>
    <property type="match status" value="1"/>
</dbReference>
<dbReference type="Pfam" id="PF13507">
    <property type="entry name" value="GATase_5"/>
    <property type="match status" value="1"/>
</dbReference>
<dbReference type="PIRSF" id="PIRSF001586">
    <property type="entry name" value="FGAM_synth_I"/>
    <property type="match status" value="1"/>
</dbReference>
<dbReference type="SMART" id="SM01211">
    <property type="entry name" value="GATase_5"/>
    <property type="match status" value="1"/>
</dbReference>
<dbReference type="SUPFAM" id="SSF52317">
    <property type="entry name" value="Class I glutamine amidotransferase-like"/>
    <property type="match status" value="1"/>
</dbReference>
<dbReference type="PROSITE" id="PS51273">
    <property type="entry name" value="GATASE_TYPE_1"/>
    <property type="match status" value="1"/>
</dbReference>
<name>PURQ_RHIEC</name>
<proteinExistence type="inferred from homology"/>
<keyword id="KW-0067">ATP-binding</keyword>
<keyword id="KW-0963">Cytoplasm</keyword>
<keyword id="KW-0315">Glutamine amidotransferase</keyword>
<keyword id="KW-0378">Hydrolase</keyword>
<keyword id="KW-0436">Ligase</keyword>
<keyword id="KW-0547">Nucleotide-binding</keyword>
<keyword id="KW-0658">Purine biosynthesis</keyword>
<keyword id="KW-1185">Reference proteome</keyword>
<reference key="1">
    <citation type="journal article" date="2006" name="Proc. Natl. Acad. Sci. U.S.A.">
        <title>The partitioned Rhizobium etli genome: genetic and metabolic redundancy in seven interacting replicons.</title>
        <authorList>
            <person name="Gonzalez V."/>
            <person name="Santamaria R.I."/>
            <person name="Bustos P."/>
            <person name="Hernandez-Gonzalez I."/>
            <person name="Medrano-Soto A."/>
            <person name="Moreno-Hagelsieb G."/>
            <person name="Janga S.C."/>
            <person name="Ramirez M.A."/>
            <person name="Jimenez-Jacinto V."/>
            <person name="Collado-Vides J."/>
            <person name="Davila G."/>
        </authorList>
    </citation>
    <scope>NUCLEOTIDE SEQUENCE [LARGE SCALE GENOMIC DNA]</scope>
    <source>
        <strain>ATCC 51251 / DSM 11541 / JCM 21823 / NBRC 15573 / CFN 42</strain>
    </source>
</reference>
<organism>
    <name type="scientific">Rhizobium etli (strain ATCC 51251 / DSM 11541 / JCM 21823 / NBRC 15573 / CFN 42)</name>
    <dbReference type="NCBI Taxonomy" id="347834"/>
    <lineage>
        <taxon>Bacteria</taxon>
        <taxon>Pseudomonadati</taxon>
        <taxon>Pseudomonadota</taxon>
        <taxon>Alphaproteobacteria</taxon>
        <taxon>Hyphomicrobiales</taxon>
        <taxon>Rhizobiaceae</taxon>
        <taxon>Rhizobium/Agrobacterium group</taxon>
        <taxon>Rhizobium</taxon>
    </lineage>
</organism>
<sequence length="223" mass="23745">MKSAVVQLPGLNRDRDMIAALTKISGHQPVTIWQTETEIPDVDLIVIPGGFSYGDYLRCGAIAARMPVMQAIIDKAAKGVKVLGVCNGFQILVEAGLLPGALMRNASLKFVCREIKLKVVNAETDFTRAYAQGQVIRCPVAHHDGNYFADEATLAKIEGNGQVLFRYAEGTNPNGSINDIAGVMNEKGNVLGMMPHPENLIEAAHGGSDGRGLFASALDVVAA</sequence>